<evidence type="ECO:0000250" key="1"/>
<evidence type="ECO:0000255" key="2">
    <source>
        <dbReference type="PROSITE-ProRule" id="PRU01126"/>
    </source>
</evidence>
<evidence type="ECO:0000305" key="3"/>
<protein>
    <recommendedName>
        <fullName>Peptide methionine sulfoxide reductase MsrB</fullName>
        <ecNumber>1.8.4.12</ecNumber>
    </recommendedName>
    <alternativeName>
        <fullName>Peptide-methionine (R)-S-oxide reductase</fullName>
    </alternativeName>
</protein>
<comment type="catalytic activity">
    <reaction>
        <text>L-methionyl-[protein] + [thioredoxin]-disulfide + H2O = L-methionyl-(R)-S-oxide-[protein] + [thioredoxin]-dithiol</text>
        <dbReference type="Rhea" id="RHEA:24164"/>
        <dbReference type="Rhea" id="RHEA-COMP:10698"/>
        <dbReference type="Rhea" id="RHEA-COMP:10700"/>
        <dbReference type="Rhea" id="RHEA-COMP:12313"/>
        <dbReference type="Rhea" id="RHEA-COMP:12314"/>
        <dbReference type="ChEBI" id="CHEBI:15377"/>
        <dbReference type="ChEBI" id="CHEBI:16044"/>
        <dbReference type="ChEBI" id="CHEBI:29950"/>
        <dbReference type="ChEBI" id="CHEBI:45764"/>
        <dbReference type="ChEBI" id="CHEBI:50058"/>
        <dbReference type="EC" id="1.8.4.12"/>
    </reaction>
</comment>
<comment type="cofactor">
    <cofactor evidence="1">
        <name>Zn(2+)</name>
        <dbReference type="ChEBI" id="CHEBI:29105"/>
    </cofactor>
    <text evidence="1">Binds 1 zinc ion per subunit. The zinc ion is important for the structural integrity of the protein.</text>
</comment>
<comment type="similarity">
    <text evidence="3">Belongs to the MsrB Met sulfoxide reductase family.</text>
</comment>
<accession>Q87AJ9</accession>
<dbReference type="EC" id="1.8.4.12"/>
<dbReference type="EMBL" id="AE009442">
    <property type="protein sequence ID" value="AAO29658.1"/>
    <property type="molecule type" value="Genomic_DNA"/>
</dbReference>
<dbReference type="RefSeq" id="WP_004088178.1">
    <property type="nucleotide sequence ID" value="NC_004556.1"/>
</dbReference>
<dbReference type="SMR" id="Q87AJ9"/>
<dbReference type="GeneID" id="93905679"/>
<dbReference type="KEGG" id="xft:PD_1825"/>
<dbReference type="HOGENOM" id="CLU_031040_8_5_6"/>
<dbReference type="Proteomes" id="UP000002516">
    <property type="component" value="Chromosome"/>
</dbReference>
<dbReference type="GO" id="GO:0005737">
    <property type="term" value="C:cytoplasm"/>
    <property type="evidence" value="ECO:0007669"/>
    <property type="project" value="TreeGrafter"/>
</dbReference>
<dbReference type="GO" id="GO:0033743">
    <property type="term" value="F:peptide-methionine (R)-S-oxide reductase activity"/>
    <property type="evidence" value="ECO:0007669"/>
    <property type="project" value="UniProtKB-UniRule"/>
</dbReference>
<dbReference type="GO" id="GO:0008270">
    <property type="term" value="F:zinc ion binding"/>
    <property type="evidence" value="ECO:0007669"/>
    <property type="project" value="UniProtKB-UniRule"/>
</dbReference>
<dbReference type="GO" id="GO:0030091">
    <property type="term" value="P:protein repair"/>
    <property type="evidence" value="ECO:0007669"/>
    <property type="project" value="InterPro"/>
</dbReference>
<dbReference type="GO" id="GO:0006979">
    <property type="term" value="P:response to oxidative stress"/>
    <property type="evidence" value="ECO:0007669"/>
    <property type="project" value="InterPro"/>
</dbReference>
<dbReference type="FunFam" id="2.170.150.20:FF:000001">
    <property type="entry name" value="Peptide methionine sulfoxide reductase MsrB"/>
    <property type="match status" value="1"/>
</dbReference>
<dbReference type="Gene3D" id="2.170.150.20">
    <property type="entry name" value="Peptide methionine sulfoxide reductase"/>
    <property type="match status" value="1"/>
</dbReference>
<dbReference type="HAMAP" id="MF_01400">
    <property type="entry name" value="MsrB"/>
    <property type="match status" value="1"/>
</dbReference>
<dbReference type="InterPro" id="IPR028427">
    <property type="entry name" value="Met_Sox_Rdtase_MsrB"/>
</dbReference>
<dbReference type="InterPro" id="IPR002579">
    <property type="entry name" value="Met_Sox_Rdtase_MsrB_dom"/>
</dbReference>
<dbReference type="InterPro" id="IPR011057">
    <property type="entry name" value="Mss4-like_sf"/>
</dbReference>
<dbReference type="NCBIfam" id="TIGR00357">
    <property type="entry name" value="peptide-methionine (R)-S-oxide reductase MsrB"/>
    <property type="match status" value="1"/>
</dbReference>
<dbReference type="PANTHER" id="PTHR10173">
    <property type="entry name" value="METHIONINE SULFOXIDE REDUCTASE"/>
    <property type="match status" value="1"/>
</dbReference>
<dbReference type="PANTHER" id="PTHR10173:SF52">
    <property type="entry name" value="METHIONINE-R-SULFOXIDE REDUCTASE B1"/>
    <property type="match status" value="1"/>
</dbReference>
<dbReference type="Pfam" id="PF01641">
    <property type="entry name" value="SelR"/>
    <property type="match status" value="1"/>
</dbReference>
<dbReference type="SUPFAM" id="SSF51316">
    <property type="entry name" value="Mss4-like"/>
    <property type="match status" value="1"/>
</dbReference>
<dbReference type="PROSITE" id="PS51790">
    <property type="entry name" value="MSRB"/>
    <property type="match status" value="1"/>
</dbReference>
<sequence length="155" mass="17568">MNVTFDLTPPSPSQREALIATLNAEERRILLQHGTEAPFCNRLLDNNQLGTYTCRLCGLPLFHSNAKFKSGTGWPSFFEPYTHTHIRKQHDTSHGMIRTEILCARCNSHLGHLFPDGPPPTYERYCLNSVSLTFIPTGTLLPDQLHRGDNTTYRT</sequence>
<name>MSRB_XYLFT</name>
<gene>
    <name type="primary">msrB</name>
    <name type="ordered locus">PD_1825</name>
</gene>
<reference key="1">
    <citation type="journal article" date="2003" name="J. Bacteriol.">
        <title>Comparative analyses of the complete genome sequences of Pierce's disease and citrus variegated chlorosis strains of Xylella fastidiosa.</title>
        <authorList>
            <person name="Van Sluys M.A."/>
            <person name="de Oliveira M.C."/>
            <person name="Monteiro-Vitorello C.B."/>
            <person name="Miyaki C.Y."/>
            <person name="Furlan L.R."/>
            <person name="Camargo L.E.A."/>
            <person name="da Silva A.C.R."/>
            <person name="Moon D.H."/>
            <person name="Takita M.A."/>
            <person name="Lemos E.G.M."/>
            <person name="Machado M.A."/>
            <person name="Ferro M.I.T."/>
            <person name="da Silva F.R."/>
            <person name="Goldman M.H.S."/>
            <person name="Goldman G.H."/>
            <person name="Lemos M.V.F."/>
            <person name="El-Dorry H."/>
            <person name="Tsai S.M."/>
            <person name="Carrer H."/>
            <person name="Carraro D.M."/>
            <person name="de Oliveira R.C."/>
            <person name="Nunes L.R."/>
            <person name="Siqueira W.J."/>
            <person name="Coutinho L.L."/>
            <person name="Kimura E.T."/>
            <person name="Ferro E.S."/>
            <person name="Harakava R."/>
            <person name="Kuramae E.E."/>
            <person name="Marino C.L."/>
            <person name="Giglioti E."/>
            <person name="Abreu I.L."/>
            <person name="Alves L.M.C."/>
            <person name="do Amaral A.M."/>
            <person name="Baia G.S."/>
            <person name="Blanco S.R."/>
            <person name="Brito M.S."/>
            <person name="Cannavan F.S."/>
            <person name="Celestino A.V."/>
            <person name="da Cunha A.F."/>
            <person name="Fenille R.C."/>
            <person name="Ferro J.A."/>
            <person name="Formighieri E.F."/>
            <person name="Kishi L.T."/>
            <person name="Leoni S.G."/>
            <person name="Oliveira A.R."/>
            <person name="Rosa V.E. Jr."/>
            <person name="Sassaki F.T."/>
            <person name="Sena J.A.D."/>
            <person name="de Souza A.A."/>
            <person name="Truffi D."/>
            <person name="Tsukumo F."/>
            <person name="Yanai G.M."/>
            <person name="Zaros L.G."/>
            <person name="Civerolo E.L."/>
            <person name="Simpson A.J.G."/>
            <person name="Almeida N.F. Jr."/>
            <person name="Setubal J.C."/>
            <person name="Kitajima J.P."/>
        </authorList>
    </citation>
    <scope>NUCLEOTIDE SEQUENCE [LARGE SCALE GENOMIC DNA]</scope>
    <source>
        <strain>Temecula1 / ATCC 700964</strain>
    </source>
</reference>
<feature type="chain" id="PRO_0000140317" description="Peptide methionine sulfoxide reductase MsrB">
    <location>
        <begin position="1"/>
        <end position="155"/>
    </location>
</feature>
<feature type="domain" description="MsrB" evidence="2">
    <location>
        <begin position="15"/>
        <end position="137"/>
    </location>
</feature>
<feature type="active site" description="Nucleophile" evidence="2">
    <location>
        <position position="126"/>
    </location>
</feature>
<feature type="binding site" evidence="2">
    <location>
        <position position="54"/>
    </location>
    <ligand>
        <name>Zn(2+)</name>
        <dbReference type="ChEBI" id="CHEBI:29105"/>
    </ligand>
</feature>
<feature type="binding site" evidence="2">
    <location>
        <position position="57"/>
    </location>
    <ligand>
        <name>Zn(2+)</name>
        <dbReference type="ChEBI" id="CHEBI:29105"/>
    </ligand>
</feature>
<feature type="binding site" evidence="2">
    <location>
        <position position="103"/>
    </location>
    <ligand>
        <name>Zn(2+)</name>
        <dbReference type="ChEBI" id="CHEBI:29105"/>
    </ligand>
</feature>
<feature type="binding site" evidence="2">
    <location>
        <position position="106"/>
    </location>
    <ligand>
        <name>Zn(2+)</name>
        <dbReference type="ChEBI" id="CHEBI:29105"/>
    </ligand>
</feature>
<organism>
    <name type="scientific">Xylella fastidiosa (strain Temecula1 / ATCC 700964)</name>
    <dbReference type="NCBI Taxonomy" id="183190"/>
    <lineage>
        <taxon>Bacteria</taxon>
        <taxon>Pseudomonadati</taxon>
        <taxon>Pseudomonadota</taxon>
        <taxon>Gammaproteobacteria</taxon>
        <taxon>Lysobacterales</taxon>
        <taxon>Lysobacteraceae</taxon>
        <taxon>Xylella</taxon>
    </lineage>
</organism>
<keyword id="KW-0479">Metal-binding</keyword>
<keyword id="KW-0560">Oxidoreductase</keyword>
<keyword id="KW-1185">Reference proteome</keyword>
<keyword id="KW-0862">Zinc</keyword>
<proteinExistence type="inferred from homology"/>